<accession>Q6GHX0</accession>
<name>CTAA_STAAR</name>
<proteinExistence type="inferred from homology"/>
<gene>
    <name evidence="1" type="primary">ctaA</name>
    <name type="ordered locus">SAR1089</name>
</gene>
<evidence type="ECO:0000255" key="1">
    <source>
        <dbReference type="HAMAP-Rule" id="MF_01664"/>
    </source>
</evidence>
<organism>
    <name type="scientific">Staphylococcus aureus (strain MRSA252)</name>
    <dbReference type="NCBI Taxonomy" id="282458"/>
    <lineage>
        <taxon>Bacteria</taxon>
        <taxon>Bacillati</taxon>
        <taxon>Bacillota</taxon>
        <taxon>Bacilli</taxon>
        <taxon>Bacillales</taxon>
        <taxon>Staphylococcaceae</taxon>
        <taxon>Staphylococcus</taxon>
    </lineage>
</organism>
<feature type="chain" id="PRO_0000348991" description="Heme A synthase">
    <location>
        <begin position="1"/>
        <end position="303"/>
    </location>
</feature>
<feature type="topological domain" description="Cytoplasmic" evidence="1">
    <location>
        <begin position="1"/>
        <end position="8"/>
    </location>
</feature>
<feature type="transmembrane region" description="Helical" evidence="1">
    <location>
        <begin position="9"/>
        <end position="29"/>
    </location>
</feature>
<feature type="topological domain" description="Extracellular" evidence="1">
    <location>
        <begin position="30"/>
        <end position="67"/>
    </location>
</feature>
<feature type="transmembrane region" description="Helical" evidence="1">
    <location>
        <begin position="68"/>
        <end position="88"/>
    </location>
</feature>
<feature type="topological domain" description="Cytoplasmic" evidence="1">
    <location>
        <begin position="89"/>
        <end position="93"/>
    </location>
</feature>
<feature type="transmembrane region" description="Helical" evidence="1">
    <location>
        <begin position="94"/>
        <end position="114"/>
    </location>
</feature>
<feature type="topological domain" description="Extracellular" evidence="1">
    <location>
        <begin position="115"/>
        <end position="125"/>
    </location>
</feature>
<feature type="transmembrane region" description="Helical" evidence="1">
    <location>
        <begin position="126"/>
        <end position="146"/>
    </location>
</feature>
<feature type="topological domain" description="Cytoplasmic" evidence="1">
    <location>
        <begin position="147"/>
        <end position="163"/>
    </location>
</feature>
<feature type="transmembrane region" description="Helical" evidence="1">
    <location>
        <begin position="164"/>
        <end position="184"/>
    </location>
</feature>
<feature type="topological domain" description="Extracellular" evidence="1">
    <location>
        <begin position="185"/>
        <end position="215"/>
    </location>
</feature>
<feature type="transmembrane region" description="Helical" evidence="1">
    <location>
        <begin position="216"/>
        <end position="236"/>
    </location>
</feature>
<feature type="topological domain" description="Cytoplasmic" evidence="1">
    <location>
        <begin position="237"/>
        <end position="244"/>
    </location>
</feature>
<feature type="transmembrane region" description="Helical" evidence="1">
    <location>
        <begin position="245"/>
        <end position="265"/>
    </location>
</feature>
<feature type="topological domain" description="Extracellular" evidence="1">
    <location>
        <begin position="266"/>
        <end position="270"/>
    </location>
</feature>
<feature type="transmembrane region" description="Helical" evidence="1">
    <location>
        <begin position="271"/>
        <end position="291"/>
    </location>
</feature>
<feature type="topological domain" description="Cytoplasmic" evidence="1">
    <location>
        <begin position="292"/>
        <end position="303"/>
    </location>
</feature>
<feature type="active site" evidence="1">
    <location>
        <position position="60"/>
    </location>
</feature>
<feature type="binding site" description="axial binding residue" evidence="1">
    <location>
        <position position="63"/>
    </location>
    <ligand>
        <name>heme o</name>
        <dbReference type="ChEBI" id="CHEBI:24480"/>
    </ligand>
    <ligandPart>
        <name>Fe</name>
        <dbReference type="ChEBI" id="CHEBI:18248"/>
    </ligandPart>
</feature>
<feature type="binding site" description="axial binding residue" evidence="1">
    <location>
        <position position="125"/>
    </location>
    <ligand>
        <name>heme o</name>
        <dbReference type="ChEBI" id="CHEBI:24480"/>
    </ligand>
    <ligandPart>
        <name>Fe</name>
        <dbReference type="ChEBI" id="CHEBI:18248"/>
    </ligandPart>
</feature>
<feature type="binding site" description="axial binding residue" evidence="1">
    <location>
        <position position="214"/>
    </location>
    <ligand>
        <name>heme b</name>
        <dbReference type="ChEBI" id="CHEBI:60344"/>
    </ligand>
    <ligandPart>
        <name>Fe</name>
        <dbReference type="ChEBI" id="CHEBI:18248"/>
    </ligandPart>
</feature>
<feature type="binding site" description="axial binding residue" evidence="1">
    <location>
        <position position="276"/>
    </location>
    <ligand>
        <name>heme b</name>
        <dbReference type="ChEBI" id="CHEBI:60344"/>
    </ligand>
    <ligandPart>
        <name>Fe</name>
        <dbReference type="ChEBI" id="CHEBI:18248"/>
    </ligandPart>
</feature>
<feature type="disulfide bond" description="Essential for catalytic activity" evidence="1">
    <location>
        <begin position="37"/>
        <end position="44"/>
    </location>
</feature>
<sequence>MFGKKNLKWLGVVATLMMTFVQLGGALVTKTGSADGCGSSWPLCHGALIPEFFPIDTIIELSHRAVSALSLLMVLWLVITAWKHIGYIKEIKPLSIISVGFLLLQALIGAAAVIWQQNDYVLALHFGISLISFSSVFLITLIIFSIDQKYEADELYIKKPLRRLTWLMAIIIYCGVYTGALVRHADASLAYGGWPLPFHDLVPHSEQDWVQLTHRIMAFIVFTIIMITYIHAVKNYPNNRTVHYGYTAAFILVILQVITGALSIMTNVNLIIALFHALFITYLFGMTTYFIMLMLRSVRSDKQ</sequence>
<keyword id="KW-1003">Cell membrane</keyword>
<keyword id="KW-1015">Disulfide bond</keyword>
<keyword id="KW-0350">Heme biosynthesis</keyword>
<keyword id="KW-0408">Iron</keyword>
<keyword id="KW-0472">Membrane</keyword>
<keyword id="KW-0479">Metal-binding</keyword>
<keyword id="KW-0560">Oxidoreductase</keyword>
<keyword id="KW-0812">Transmembrane</keyword>
<keyword id="KW-1133">Transmembrane helix</keyword>
<comment type="function">
    <text evidence="1">Catalyzes the conversion of heme O to heme A by two successive hydroxylations of the methyl group at C8. The first hydroxylation forms heme I, the second hydroxylation results in an unstable dihydroxymethyl group, which spontaneously dehydrates, resulting in the formyl group of heme A.</text>
</comment>
<comment type="catalytic activity">
    <reaction evidence="1">
        <text>Fe(II)-heme o + 2 A + H2O = Fe(II)-heme a + 2 AH2</text>
        <dbReference type="Rhea" id="RHEA:63388"/>
        <dbReference type="ChEBI" id="CHEBI:13193"/>
        <dbReference type="ChEBI" id="CHEBI:15377"/>
        <dbReference type="ChEBI" id="CHEBI:17499"/>
        <dbReference type="ChEBI" id="CHEBI:60530"/>
        <dbReference type="ChEBI" id="CHEBI:61715"/>
        <dbReference type="EC" id="1.17.99.9"/>
    </reaction>
    <physiologicalReaction direction="left-to-right" evidence="1">
        <dbReference type="Rhea" id="RHEA:63389"/>
    </physiologicalReaction>
</comment>
<comment type="cofactor">
    <cofactor evidence="1">
        <name>heme b</name>
        <dbReference type="ChEBI" id="CHEBI:60344"/>
    </cofactor>
</comment>
<comment type="pathway">
    <text evidence="1">Porphyrin-containing compound metabolism; heme A biosynthesis; heme A from heme O: step 1/1.</text>
</comment>
<comment type="subunit">
    <text evidence="1">Interacts with CtaB.</text>
</comment>
<comment type="subcellular location">
    <subcellularLocation>
        <location evidence="1">Cell membrane</location>
        <topology evidence="1">Multi-pass membrane protein</topology>
    </subcellularLocation>
</comment>
<comment type="domain">
    <text evidence="1">The N-half (TM1-TM4) and C-half (TM5-TM8) domains are connected by an intracellular loop. Each domain is formed from four-helix bundles and they align in a pseudo twofold symmetry manner. The N-half domain is the substrate-heme O binding domain and the C-half domain is the cofactor heme B binding domain.</text>
</comment>
<comment type="domain">
    <text evidence="1">The cysteines of disulfide bond Cys-37 and Cys-44 may be involved in transfer of reducing equivalents from quinol in the membrane to the active site of the enzyme.</text>
</comment>
<comment type="similarity">
    <text evidence="1">Belongs to the COX15/CtaA family. Type 1 subfamily.</text>
</comment>
<dbReference type="EC" id="1.17.99.9" evidence="1"/>
<dbReference type="EMBL" id="BX571856">
    <property type="protein sequence ID" value="CAG40091.1"/>
    <property type="molecule type" value="Genomic_DNA"/>
</dbReference>
<dbReference type="RefSeq" id="WP_000467123.1">
    <property type="nucleotide sequence ID" value="NC_002952.2"/>
</dbReference>
<dbReference type="SMR" id="Q6GHX0"/>
<dbReference type="KEGG" id="sar:SAR1089"/>
<dbReference type="HOGENOM" id="CLU_041525_3_1_9"/>
<dbReference type="UniPathway" id="UPA00269">
    <property type="reaction ID" value="UER00713"/>
</dbReference>
<dbReference type="Proteomes" id="UP000000596">
    <property type="component" value="Chromosome"/>
</dbReference>
<dbReference type="GO" id="GO:0005886">
    <property type="term" value="C:plasma membrane"/>
    <property type="evidence" value="ECO:0007669"/>
    <property type="project" value="UniProtKB-SubCell"/>
</dbReference>
<dbReference type="GO" id="GO:0046872">
    <property type="term" value="F:metal ion binding"/>
    <property type="evidence" value="ECO:0007669"/>
    <property type="project" value="UniProtKB-KW"/>
</dbReference>
<dbReference type="GO" id="GO:0016653">
    <property type="term" value="F:oxidoreductase activity, acting on NAD(P)H, heme protein as acceptor"/>
    <property type="evidence" value="ECO:0007669"/>
    <property type="project" value="InterPro"/>
</dbReference>
<dbReference type="GO" id="GO:0006784">
    <property type="term" value="P:heme A biosynthetic process"/>
    <property type="evidence" value="ECO:0007669"/>
    <property type="project" value="UniProtKB-UniRule"/>
</dbReference>
<dbReference type="HAMAP" id="MF_01664">
    <property type="entry name" value="HemeA_synth_type1"/>
    <property type="match status" value="1"/>
</dbReference>
<dbReference type="InterPro" id="IPR003780">
    <property type="entry name" value="COX15/CtaA_fam"/>
</dbReference>
<dbReference type="InterPro" id="IPR050450">
    <property type="entry name" value="COX15/CtaA_HemeA_synthase"/>
</dbReference>
<dbReference type="InterPro" id="IPR023755">
    <property type="entry name" value="HemeA_Synthase_type1"/>
</dbReference>
<dbReference type="PANTHER" id="PTHR35457">
    <property type="entry name" value="HEME A SYNTHASE"/>
    <property type="match status" value="1"/>
</dbReference>
<dbReference type="PANTHER" id="PTHR35457:SF1">
    <property type="entry name" value="HEME A SYNTHASE"/>
    <property type="match status" value="1"/>
</dbReference>
<dbReference type="Pfam" id="PF02628">
    <property type="entry name" value="COX15-CtaA"/>
    <property type="match status" value="1"/>
</dbReference>
<protein>
    <recommendedName>
        <fullName evidence="1">Heme A synthase</fullName>
        <shortName evidence="1">HAS</shortName>
        <ecNumber evidence="1">1.17.99.9</ecNumber>
    </recommendedName>
    <alternativeName>
        <fullName evidence="1">Cytochrome aa3-controlling protein</fullName>
    </alternativeName>
</protein>
<reference key="1">
    <citation type="journal article" date="2004" name="Proc. Natl. Acad. Sci. U.S.A.">
        <title>Complete genomes of two clinical Staphylococcus aureus strains: evidence for the rapid evolution of virulence and drug resistance.</title>
        <authorList>
            <person name="Holden M.T.G."/>
            <person name="Feil E.J."/>
            <person name="Lindsay J.A."/>
            <person name="Peacock S.J."/>
            <person name="Day N.P.J."/>
            <person name="Enright M.C."/>
            <person name="Foster T.J."/>
            <person name="Moore C.E."/>
            <person name="Hurst L."/>
            <person name="Atkin R."/>
            <person name="Barron A."/>
            <person name="Bason N."/>
            <person name="Bentley S.D."/>
            <person name="Chillingworth C."/>
            <person name="Chillingworth T."/>
            <person name="Churcher C."/>
            <person name="Clark L."/>
            <person name="Corton C."/>
            <person name="Cronin A."/>
            <person name="Doggett J."/>
            <person name="Dowd L."/>
            <person name="Feltwell T."/>
            <person name="Hance Z."/>
            <person name="Harris B."/>
            <person name="Hauser H."/>
            <person name="Holroyd S."/>
            <person name="Jagels K."/>
            <person name="James K.D."/>
            <person name="Lennard N."/>
            <person name="Line A."/>
            <person name="Mayes R."/>
            <person name="Moule S."/>
            <person name="Mungall K."/>
            <person name="Ormond D."/>
            <person name="Quail M.A."/>
            <person name="Rabbinowitsch E."/>
            <person name="Rutherford K.M."/>
            <person name="Sanders M."/>
            <person name="Sharp S."/>
            <person name="Simmonds M."/>
            <person name="Stevens K."/>
            <person name="Whitehead S."/>
            <person name="Barrell B.G."/>
            <person name="Spratt B.G."/>
            <person name="Parkhill J."/>
        </authorList>
    </citation>
    <scope>NUCLEOTIDE SEQUENCE [LARGE SCALE GENOMIC DNA]</scope>
    <source>
        <strain>MRSA252</strain>
    </source>
</reference>